<proteinExistence type="inferred from homology"/>
<protein>
    <recommendedName>
        <fullName>WD repeat-containing protein 13</fullName>
    </recommendedName>
</protein>
<comment type="subcellular location">
    <subcellularLocation>
        <location evidence="1">Nucleus</location>
    </subcellularLocation>
</comment>
<name>WDR13_PANTR</name>
<sequence>MAAVWQQVLAVDARYNAYRTPTFPQFRTQYIRRRSQLLRENAKAGHPPALRRQYLRLRGQLLGQRYGPLSEPGSARAYSNSIVRSSRTTLDRMEDFEDDPRALGARGHRRSVSRGSYQLQAQMNRAVYEDRPPGSVVPTSAAEASRAMAGDTSLSENYAFAGMYHVFDQHVDEAVPRVRFANDDRHRLACCSLDGSISLCQLVPAPPTVLRVLRGHTRGVSDFAWSLSNDILVSTSLDATMRIWASEDGRCIREIPDPDSAELLCCTFQPVNNNLTVVGNAKHNVHVMNISTGKKVKGGSSKLTGRVLALSFDAPGRLLWAGDDRGSVFSFLFDMATGKLTKAKRLVVHEGSPVTSISARSWVSREARDPSLLINACLNKLLLYRVVDNEGTLQLKRSFPIEQSSHPVRSIFCPLMSFRQGACVVTGSEDMCVHFFDVERAAKAAVNKLQGHSAPVLDVSFNCDESLLASSDASGMVIVWRREQK</sequence>
<organism>
    <name type="scientific">Pan troglodytes</name>
    <name type="common">Chimpanzee</name>
    <dbReference type="NCBI Taxonomy" id="9598"/>
    <lineage>
        <taxon>Eukaryota</taxon>
        <taxon>Metazoa</taxon>
        <taxon>Chordata</taxon>
        <taxon>Craniata</taxon>
        <taxon>Vertebrata</taxon>
        <taxon>Euteleostomi</taxon>
        <taxon>Mammalia</taxon>
        <taxon>Eutheria</taxon>
        <taxon>Euarchontoglires</taxon>
        <taxon>Primates</taxon>
        <taxon>Haplorrhini</taxon>
        <taxon>Catarrhini</taxon>
        <taxon>Hominidae</taxon>
        <taxon>Pan</taxon>
    </lineage>
</organism>
<reference key="1">
    <citation type="submission" date="2004-06" db="EMBL/GenBank/DDBJ databases">
        <title>ORF of WDR13 homolog in chimpanzee.</title>
        <authorList>
            <person name="Suresh A."/>
            <person name="Singh L."/>
        </authorList>
    </citation>
    <scope>NUCLEOTIDE SEQUENCE [GENOMIC DNA]</scope>
</reference>
<reference key="2">
    <citation type="submission" date="2005-01" db="EMBL/GenBank/DDBJ databases">
        <title>Pan troglotydes WDR13 gene.</title>
        <authorList>
            <person name="Suresh A."/>
            <person name="Singh L."/>
        </authorList>
    </citation>
    <scope>NUCLEOTIDE SEQUENCE [GENOMIC DNA]</scope>
</reference>
<feature type="chain" id="PRO_0000051363" description="WD repeat-containing protein 13">
    <location>
        <begin position="1"/>
        <end position="485"/>
    </location>
</feature>
<feature type="repeat" description="WD 1">
    <location>
        <begin position="170"/>
        <end position="210"/>
    </location>
</feature>
<feature type="repeat" description="WD 2">
    <location>
        <begin position="215"/>
        <end position="254"/>
    </location>
</feature>
<feature type="repeat" description="WD 3">
    <location>
        <begin position="302"/>
        <end position="341"/>
    </location>
</feature>
<feature type="repeat" description="WD 4">
    <location>
        <begin position="406"/>
        <end position="446"/>
    </location>
</feature>
<feature type="repeat" description="WD 5">
    <location>
        <begin position="451"/>
        <end position="484"/>
    </location>
</feature>
<feature type="modified residue" description="Phosphoserine" evidence="3">
    <location>
        <position position="70"/>
    </location>
</feature>
<feature type="modified residue" description="Phosphoserine" evidence="3">
    <location>
        <position position="74"/>
    </location>
</feature>
<feature type="modified residue" description="Phosphoserine" evidence="3">
    <location>
        <position position="79"/>
    </location>
</feature>
<feature type="modified residue" description="Asymmetric dimethylarginine; alternate" evidence="2">
    <location>
        <position position="114"/>
    </location>
</feature>
<feature type="modified residue" description="Omega-N-methylarginine; alternate" evidence="3">
    <location>
        <position position="114"/>
    </location>
</feature>
<gene>
    <name type="primary">WDR13</name>
</gene>
<evidence type="ECO:0000250" key="1"/>
<evidence type="ECO:0000250" key="2">
    <source>
        <dbReference type="UniProtKB" id="Q91V09"/>
    </source>
</evidence>
<evidence type="ECO:0000250" key="3">
    <source>
        <dbReference type="UniProtKB" id="Q9H1Z4"/>
    </source>
</evidence>
<dbReference type="EMBL" id="AY685217">
    <property type="protein sequence ID" value="AAT74930.1"/>
    <property type="molecule type" value="Genomic_DNA"/>
</dbReference>
<dbReference type="EMBL" id="AY685209">
    <property type="protein sequence ID" value="AAT74930.1"/>
    <property type="status" value="JOINED"/>
    <property type="molecule type" value="Genomic_DNA"/>
</dbReference>
<dbReference type="EMBL" id="AY685210">
    <property type="protein sequence ID" value="AAT74930.1"/>
    <property type="status" value="JOINED"/>
    <property type="molecule type" value="Genomic_DNA"/>
</dbReference>
<dbReference type="EMBL" id="AY685211">
    <property type="protein sequence ID" value="AAT74930.1"/>
    <property type="status" value="JOINED"/>
    <property type="molecule type" value="Genomic_DNA"/>
</dbReference>
<dbReference type="EMBL" id="AY685212">
    <property type="protein sequence ID" value="AAT74930.1"/>
    <property type="status" value="JOINED"/>
    <property type="molecule type" value="Genomic_DNA"/>
</dbReference>
<dbReference type="EMBL" id="AY685213">
    <property type="protein sequence ID" value="AAT74930.1"/>
    <property type="status" value="JOINED"/>
    <property type="molecule type" value="Genomic_DNA"/>
</dbReference>
<dbReference type="EMBL" id="AY685214">
    <property type="protein sequence ID" value="AAT74930.1"/>
    <property type="status" value="JOINED"/>
    <property type="molecule type" value="Genomic_DNA"/>
</dbReference>
<dbReference type="EMBL" id="AY685215">
    <property type="protein sequence ID" value="AAT74930.1"/>
    <property type="status" value="JOINED"/>
    <property type="molecule type" value="Genomic_DNA"/>
</dbReference>
<dbReference type="EMBL" id="AY685216">
    <property type="protein sequence ID" value="AAT74930.1"/>
    <property type="status" value="JOINED"/>
    <property type="molecule type" value="Genomic_DNA"/>
</dbReference>
<dbReference type="EMBL" id="AY888002">
    <property type="protein sequence ID" value="AAW78399.1"/>
    <property type="molecule type" value="Genomic_DNA"/>
</dbReference>
<dbReference type="RefSeq" id="NP_001009006.1">
    <property type="nucleotide sequence ID" value="NM_001009006.2"/>
</dbReference>
<dbReference type="RefSeq" id="XP_016798096.1">
    <property type="nucleotide sequence ID" value="XM_016942607.4"/>
</dbReference>
<dbReference type="RefSeq" id="XP_016798099.1">
    <property type="nucleotide sequence ID" value="XM_016942610.3"/>
</dbReference>
<dbReference type="SMR" id="Q6DKP5"/>
<dbReference type="FunCoup" id="Q6DKP5">
    <property type="interactions" value="985"/>
</dbReference>
<dbReference type="STRING" id="9598.ENSPTRP00000047430"/>
<dbReference type="PaxDb" id="9598-ENSPTRP00000047430"/>
<dbReference type="GeneID" id="449584"/>
<dbReference type="KEGG" id="ptr:449584"/>
<dbReference type="CTD" id="64743"/>
<dbReference type="eggNOG" id="KOG0266">
    <property type="taxonomic scope" value="Eukaryota"/>
</dbReference>
<dbReference type="InParanoid" id="Q6DKP5"/>
<dbReference type="Proteomes" id="UP000002277">
    <property type="component" value="Unplaced"/>
</dbReference>
<dbReference type="GO" id="GO:0005634">
    <property type="term" value="C:nucleus"/>
    <property type="evidence" value="ECO:0007669"/>
    <property type="project" value="UniProtKB-SubCell"/>
</dbReference>
<dbReference type="GO" id="GO:1990841">
    <property type="term" value="F:promoter-specific chromatin binding"/>
    <property type="evidence" value="ECO:0000318"/>
    <property type="project" value="GO_Central"/>
</dbReference>
<dbReference type="FunFam" id="2.130.10.10:FF:000382">
    <property type="entry name" value="WD repeat-containing protein 13"/>
    <property type="match status" value="1"/>
</dbReference>
<dbReference type="Gene3D" id="2.130.10.10">
    <property type="entry name" value="YVTN repeat-like/Quinoprotein amine dehydrogenase"/>
    <property type="match status" value="2"/>
</dbReference>
<dbReference type="InterPro" id="IPR015943">
    <property type="entry name" value="WD40/YVTN_repeat-like_dom_sf"/>
</dbReference>
<dbReference type="InterPro" id="IPR036322">
    <property type="entry name" value="WD40_repeat_dom_sf"/>
</dbReference>
<dbReference type="InterPro" id="IPR001680">
    <property type="entry name" value="WD40_rpt"/>
</dbReference>
<dbReference type="InterPro" id="IPR051350">
    <property type="entry name" value="WD_repeat-ST_regulator"/>
</dbReference>
<dbReference type="PANTHER" id="PTHR22838">
    <property type="entry name" value="WD REPEAT PROTEIN 26-RELATED"/>
    <property type="match status" value="1"/>
</dbReference>
<dbReference type="PANTHER" id="PTHR22838:SF4">
    <property type="entry name" value="WD REPEAT-CONTAINING PROTEIN 13"/>
    <property type="match status" value="1"/>
</dbReference>
<dbReference type="Pfam" id="PF00400">
    <property type="entry name" value="WD40"/>
    <property type="match status" value="2"/>
</dbReference>
<dbReference type="SMART" id="SM00320">
    <property type="entry name" value="WD40"/>
    <property type="match status" value="5"/>
</dbReference>
<dbReference type="SUPFAM" id="SSF50978">
    <property type="entry name" value="WD40 repeat-like"/>
    <property type="match status" value="1"/>
</dbReference>
<dbReference type="PROSITE" id="PS50082">
    <property type="entry name" value="WD_REPEATS_2"/>
    <property type="match status" value="2"/>
</dbReference>
<dbReference type="PROSITE" id="PS50294">
    <property type="entry name" value="WD_REPEATS_REGION"/>
    <property type="match status" value="2"/>
</dbReference>
<accession>Q6DKP5</accession>
<accession>Q5EFL4</accession>
<keyword id="KW-0488">Methylation</keyword>
<keyword id="KW-0539">Nucleus</keyword>
<keyword id="KW-0597">Phosphoprotein</keyword>
<keyword id="KW-1185">Reference proteome</keyword>
<keyword id="KW-0677">Repeat</keyword>
<keyword id="KW-0853">WD repeat</keyword>